<accession>A8G2W0</accession>
<dbReference type="EMBL" id="CP000825">
    <property type="protein sequence ID" value="ABV49941.1"/>
    <property type="molecule type" value="Genomic_DNA"/>
</dbReference>
<dbReference type="RefSeq" id="WP_002806119.1">
    <property type="nucleotide sequence ID" value="NC_009840.1"/>
</dbReference>
<dbReference type="SMR" id="A8G2W0"/>
<dbReference type="STRING" id="93060.P9215_03241"/>
<dbReference type="KEGG" id="pmh:P9215_03241"/>
<dbReference type="HOGENOM" id="CLU_214425_0_0_3"/>
<dbReference type="OrthoDB" id="560356at2"/>
<dbReference type="Proteomes" id="UP000002014">
    <property type="component" value="Chromosome"/>
</dbReference>
<dbReference type="GO" id="GO:0009539">
    <property type="term" value="C:photosystem II reaction center"/>
    <property type="evidence" value="ECO:0007669"/>
    <property type="project" value="InterPro"/>
</dbReference>
<dbReference type="GO" id="GO:0031676">
    <property type="term" value="C:plasma membrane-derived thylakoid membrane"/>
    <property type="evidence" value="ECO:0007669"/>
    <property type="project" value="UniProtKB-SubCell"/>
</dbReference>
<dbReference type="GO" id="GO:0015979">
    <property type="term" value="P:photosynthesis"/>
    <property type="evidence" value="ECO:0007669"/>
    <property type="project" value="UniProtKB-UniRule"/>
</dbReference>
<dbReference type="HAMAP" id="MF_01317">
    <property type="entry name" value="PSII_PsbL"/>
    <property type="match status" value="1"/>
</dbReference>
<dbReference type="InterPro" id="IPR003372">
    <property type="entry name" value="PSII_PsbL"/>
</dbReference>
<dbReference type="InterPro" id="IPR037266">
    <property type="entry name" value="PSII_PsbL_sf"/>
</dbReference>
<dbReference type="NCBIfam" id="NF001972">
    <property type="entry name" value="PRK00753.1"/>
    <property type="match status" value="1"/>
</dbReference>
<dbReference type="Pfam" id="PF02419">
    <property type="entry name" value="PsbL"/>
    <property type="match status" value="1"/>
</dbReference>
<dbReference type="SUPFAM" id="SSF161017">
    <property type="entry name" value="Photosystem II reaction center protein L, PsbL"/>
    <property type="match status" value="1"/>
</dbReference>
<feature type="chain" id="PRO_0000353249" description="Photosystem II reaction center protein L">
    <location>
        <begin position="1"/>
        <end position="39"/>
    </location>
</feature>
<feature type="transmembrane region" description="Helical" evidence="1">
    <location>
        <begin position="18"/>
        <end position="38"/>
    </location>
</feature>
<reference key="1">
    <citation type="journal article" date="2007" name="PLoS Genet.">
        <title>Patterns and implications of gene gain and loss in the evolution of Prochlorococcus.</title>
        <authorList>
            <person name="Kettler G.C."/>
            <person name="Martiny A.C."/>
            <person name="Huang K."/>
            <person name="Zucker J."/>
            <person name="Coleman M.L."/>
            <person name="Rodrigue S."/>
            <person name="Chen F."/>
            <person name="Lapidus A."/>
            <person name="Ferriera S."/>
            <person name="Johnson J."/>
            <person name="Steglich C."/>
            <person name="Church G.M."/>
            <person name="Richardson P."/>
            <person name="Chisholm S.W."/>
        </authorList>
    </citation>
    <scope>NUCLEOTIDE SEQUENCE [LARGE SCALE GENOMIC DNA]</scope>
    <source>
        <strain>MIT 9215</strain>
    </source>
</reference>
<proteinExistence type="inferred from homology"/>
<gene>
    <name evidence="1" type="primary">psbL</name>
    <name type="ordered locus">P9215_03241</name>
</gene>
<evidence type="ECO:0000255" key="1">
    <source>
        <dbReference type="HAMAP-Rule" id="MF_01317"/>
    </source>
</evidence>
<evidence type="ECO:0000305" key="2"/>
<name>PSBL_PROM2</name>
<comment type="function">
    <text evidence="1">One of the components of the core complex of photosystem II (PSII). PSII is a light-driven water:plastoquinone oxidoreductase that uses light energy to abstract electrons from H(2)O, generating O(2) and a proton gradient subsequently used for ATP formation. It consists of a core antenna complex that captures photons, and an electron transfer chain that converts photonic excitation into a charge separation. This subunit is found at the monomer-monomer interface and is required for correct PSII assembly and/or dimerization.</text>
</comment>
<comment type="subunit">
    <text evidence="2">PSII is composed of 1 copy each of membrane proteins PsbA, PsbB, PsbC, PsbD, PsbE, PsbF, PsbH, PsbI, PsbJ, PsbK, PsbL, PsbM, PsbT, PsbX, PsbY, Psb30/Ycf12, peripheral proteins PsbO, CyanoQ (PsbQ), PsbU, PsbV and a large number of cofactors. It forms dimeric complexes.</text>
</comment>
<comment type="subcellular location">
    <subcellularLocation>
        <location evidence="1">Cellular thylakoid membrane</location>
        <topology evidence="1">Single-pass membrane protein</topology>
    </subcellularLocation>
</comment>
<comment type="similarity">
    <text evidence="1">Belongs to the PsbL family.</text>
</comment>
<keyword id="KW-0472">Membrane</keyword>
<keyword id="KW-0602">Photosynthesis</keyword>
<keyword id="KW-0604">Photosystem II</keyword>
<keyword id="KW-0674">Reaction center</keyword>
<keyword id="KW-0793">Thylakoid</keyword>
<keyword id="KW-0812">Transmembrane</keyword>
<keyword id="KW-1133">Transmembrane helix</keyword>
<organism>
    <name type="scientific">Prochlorococcus marinus (strain MIT 9215)</name>
    <dbReference type="NCBI Taxonomy" id="93060"/>
    <lineage>
        <taxon>Bacteria</taxon>
        <taxon>Bacillati</taxon>
        <taxon>Cyanobacteriota</taxon>
        <taxon>Cyanophyceae</taxon>
        <taxon>Synechococcales</taxon>
        <taxon>Prochlorococcaceae</taxon>
        <taxon>Prochlorococcus</taxon>
    </lineage>
</organism>
<protein>
    <recommendedName>
        <fullName evidence="1">Photosystem II reaction center protein L</fullName>
        <shortName evidence="1">PSII-L</shortName>
    </recommendedName>
</protein>
<sequence>MQVNENPNKVPVELNRTSLYLGLLSVFVLGILFSSYFFN</sequence>